<evidence type="ECO:0000250" key="1"/>
<evidence type="ECO:0000250" key="2">
    <source>
        <dbReference type="UniProtKB" id="P27775"/>
    </source>
</evidence>
<evidence type="ECO:0000256" key="3">
    <source>
        <dbReference type="SAM" id="MobiDB-lite"/>
    </source>
</evidence>
<evidence type="ECO:0000303" key="4">
    <source>
    </source>
</evidence>
<evidence type="ECO:0000305" key="5"/>
<comment type="function">
    <text>Extremely potent competitive inhibitor of cAMP-dependent protein kinase activity, this protein interacts with the catalytic subunit of the enzyme after the cAMP-induced dissociation of its regulatory chains.</text>
</comment>
<comment type="alternative products">
    <event type="alternative splicing"/>
    <isoform>
        <id>Q04758-1</id>
        <name>2</name>
        <sequence type="displayed"/>
    </isoform>
    <isoform>
        <id>Q04758-2</id>
        <name>1</name>
        <sequence type="described" ref="VSP_002754"/>
    </isoform>
</comment>
<comment type="similarity">
    <text evidence="5">Belongs to the PKI family.</text>
</comment>
<protein>
    <recommendedName>
        <fullName>cAMP-dependent protein kinase inhibitor beta</fullName>
    </recommendedName>
    <alternativeName>
        <fullName>PKI-beta</fullName>
    </alternativeName>
    <alternativeName>
        <fullName>cAMP-dependent protein kinase inhibitor, testis isoform</fullName>
    </alternativeName>
</protein>
<gene>
    <name type="primary">Pkib</name>
</gene>
<accession>Q04758</accession>
<organism>
    <name type="scientific">Mus musculus</name>
    <name type="common">Mouse</name>
    <dbReference type="NCBI Taxonomy" id="10090"/>
    <lineage>
        <taxon>Eukaryota</taxon>
        <taxon>Metazoa</taxon>
        <taxon>Chordata</taxon>
        <taxon>Craniata</taxon>
        <taxon>Vertebrata</taxon>
        <taxon>Euteleostomi</taxon>
        <taxon>Mammalia</taxon>
        <taxon>Eutheria</taxon>
        <taxon>Euarchontoglires</taxon>
        <taxon>Glires</taxon>
        <taxon>Rodentia</taxon>
        <taxon>Myomorpha</taxon>
        <taxon>Muroidea</taxon>
        <taxon>Muridae</taxon>
        <taxon>Murinae</taxon>
        <taxon>Mus</taxon>
        <taxon>Mus</taxon>
    </lineage>
</organism>
<proteinExistence type="inferred from homology"/>
<name>IPKB_MOUSE</name>
<reference key="1">
    <citation type="journal article" date="1993" name="J. Biol. Chem.">
        <title>Evidence for two additional isoforms of the endogenous protein kinase inhibitor of cAMP-dependent protein kinase in mouse.</title>
        <authorList>
            <person name="Scarpetta M.A."/>
            <person name="Uhler M.D."/>
        </authorList>
    </citation>
    <scope>NUCLEOTIDE SEQUENCE [MRNA] (ISOFORMS 1 AND 2)</scope>
    <source>
        <tissue>Brain</tissue>
    </source>
</reference>
<reference key="2">
    <citation type="journal article" date="1994" name="J. Biol. Chem.">
        <title>Glutamic acid 203 of the cAMP-dependent protein kinase catalytic subunit participates in the inhibition by two isoforms of the protein kinase inhibitor.</title>
        <authorList>
            <person name="Baude E.J."/>
            <person name="Dignam S.S."/>
            <person name="Olsen S.R."/>
            <person name="Reimann E.M."/>
            <person name="Uhler M.D."/>
        </authorList>
    </citation>
    <scope>NUCLEOTIDE SEQUENCE [MRNA] OF 23-92</scope>
</reference>
<keyword id="KW-0025">Alternative splicing</keyword>
<keyword id="KW-0597">Phosphoprotein</keyword>
<keyword id="KW-0649">Protein kinase inhibitor</keyword>
<keyword id="KW-1185">Reference proteome</keyword>
<sequence length="92" mass="9682">MGGGTSPEAQQDSVMRTDSSEMTDVESVITSFASSARAGRRNALPDIQSSLATSGSSDLPLKLEALAVKEDAKTKNEEKDQGQPKTPLNEGK</sequence>
<feature type="chain" id="PRO_0000154539" description="cAMP-dependent protein kinase inhibitor beta">
    <location>
        <begin position="1"/>
        <end position="92"/>
    </location>
</feature>
<feature type="region of interest" description="Disordered" evidence="3">
    <location>
        <begin position="1"/>
        <end position="26"/>
    </location>
</feature>
<feature type="region of interest" description="Disordered" evidence="3">
    <location>
        <begin position="70"/>
        <end position="92"/>
    </location>
</feature>
<feature type="compositionally biased region" description="Polar residues" evidence="3">
    <location>
        <begin position="7"/>
        <end position="26"/>
    </location>
</feature>
<feature type="compositionally biased region" description="Basic and acidic residues" evidence="3">
    <location>
        <begin position="70"/>
        <end position="82"/>
    </location>
</feature>
<feature type="site" description="Important for inhibition" evidence="1">
    <location>
        <position position="37"/>
    </location>
</feature>
<feature type="site" description="Important for inhibition" evidence="1">
    <location>
        <position position="40"/>
    </location>
</feature>
<feature type="site" description="Important for inhibition" evidence="1">
    <location>
        <position position="41"/>
    </location>
</feature>
<feature type="modified residue" description="Phosphoserine" evidence="2">
    <location>
        <position position="56"/>
    </location>
</feature>
<feature type="splice variant" id="VSP_002754" description="In isoform 1." evidence="4">
    <location>
        <begin position="1"/>
        <end position="21"/>
    </location>
</feature>
<dbReference type="EMBL" id="L02241">
    <property type="protein sequence ID" value="AAB59678.1"/>
    <property type="molecule type" value="mRNA"/>
</dbReference>
<dbReference type="PIR" id="B46707">
    <property type="entry name" value="B46707"/>
</dbReference>
<dbReference type="FunCoup" id="Q04758">
    <property type="interactions" value="1626"/>
</dbReference>
<dbReference type="STRING" id="10090.ENSMUSP00000093329"/>
<dbReference type="GlyGen" id="Q04758">
    <property type="glycosylation" value="1 site, 1 O-linked glycan (1 site)"/>
</dbReference>
<dbReference type="iPTMnet" id="Q04758"/>
<dbReference type="PhosphoSitePlus" id="Q04758"/>
<dbReference type="PaxDb" id="10090-ENSMUSP00000093329"/>
<dbReference type="PeptideAtlas" id="Q04758"/>
<dbReference type="ProteomicsDB" id="269322">
    <molecule id="Q04758-1"/>
</dbReference>
<dbReference type="ProteomicsDB" id="269323">
    <molecule id="Q04758-2"/>
</dbReference>
<dbReference type="UCSC" id="uc007fcq.2">
    <molecule id="Q04758-1"/>
    <property type="organism name" value="mouse"/>
</dbReference>
<dbReference type="AGR" id="MGI:101937"/>
<dbReference type="MGI" id="MGI:101937">
    <property type="gene designation" value="Pkib"/>
</dbReference>
<dbReference type="eggNOG" id="ENOG502S8BW">
    <property type="taxonomic scope" value="Eukaryota"/>
</dbReference>
<dbReference type="InParanoid" id="Q04758"/>
<dbReference type="PhylomeDB" id="Q04758"/>
<dbReference type="ChiTaRS" id="Pkib">
    <property type="organism name" value="mouse"/>
</dbReference>
<dbReference type="PRO" id="PR:Q04758"/>
<dbReference type="Proteomes" id="UP000000589">
    <property type="component" value="Unplaced"/>
</dbReference>
<dbReference type="RNAct" id="Q04758">
    <property type="molecule type" value="protein"/>
</dbReference>
<dbReference type="GO" id="GO:0004862">
    <property type="term" value="F:cAMP-dependent protein kinase inhibitor activity"/>
    <property type="evidence" value="ECO:0000314"/>
    <property type="project" value="MGI"/>
</dbReference>
<dbReference type="InterPro" id="IPR004171">
    <property type="entry name" value="cAMP_dep_PKI"/>
</dbReference>
<dbReference type="PANTHER" id="PTHR15416">
    <property type="entry name" value="CAMP-DEPENDENT PROTEIN KINASE INHIBITOR/PKI"/>
    <property type="match status" value="1"/>
</dbReference>
<dbReference type="Pfam" id="PF02827">
    <property type="entry name" value="PKI"/>
    <property type="match status" value="1"/>
</dbReference>